<accession>B7GNC5</accession>
<accession>E8MN69</accession>
<proteinExistence type="inferred from homology"/>
<reference key="1">
    <citation type="journal article" date="2008" name="Proc. Natl. Acad. Sci. U.S.A.">
        <title>The genome sequence of Bifidobacterium longum subsp. infantis reveals adaptations for milk utilization within the infant microbiome.</title>
        <authorList>
            <person name="Sela D.A."/>
            <person name="Chapman J."/>
            <person name="Adeuya A."/>
            <person name="Kim J.H."/>
            <person name="Chen F."/>
            <person name="Whitehead T.R."/>
            <person name="Lapidus A."/>
            <person name="Rokhsar D.S."/>
            <person name="Lebrilla C.B."/>
            <person name="German J.B."/>
            <person name="Price N.P."/>
            <person name="Richardson P.M."/>
            <person name="Mills D.A."/>
        </authorList>
    </citation>
    <scope>NUCLEOTIDE SEQUENCE [LARGE SCALE GENOMIC DNA]</scope>
    <source>
        <strain>ATCC 15697 / DSM 20088 / JCM 1222 / NCTC 11817 / S12</strain>
    </source>
</reference>
<reference key="2">
    <citation type="journal article" date="2011" name="Nature">
        <title>Bifidobacteria can protect from enteropathogenic infection through production of acetate.</title>
        <authorList>
            <person name="Fukuda S."/>
            <person name="Toh H."/>
            <person name="Hase K."/>
            <person name="Oshima K."/>
            <person name="Nakanishi Y."/>
            <person name="Yoshimura K."/>
            <person name="Tobe T."/>
            <person name="Clarke J.M."/>
            <person name="Topping D.L."/>
            <person name="Suzuki T."/>
            <person name="Taylor T.D."/>
            <person name="Itoh K."/>
            <person name="Kikuchi J."/>
            <person name="Morita H."/>
            <person name="Hattori M."/>
            <person name="Ohno H."/>
        </authorList>
    </citation>
    <scope>NUCLEOTIDE SEQUENCE [LARGE SCALE GENOMIC DNA]</scope>
    <source>
        <strain>ATCC 15697 / DSM 20088 / JCM 1222 / NCTC 11817 / S12</strain>
    </source>
</reference>
<feature type="chain" id="PRO_1000166791" description="Large ribosomal subunit protein uL6">
    <location>
        <begin position="1"/>
        <end position="179"/>
    </location>
</feature>
<sequence>MASHIGKLPIAIPAGVEVKIEGQNFSAKGAKGSDSYVVPEGITAAVEGNEIVLTAADDLRPTRAKHGLARSIMAGMVKGVHDGYSKTLEIVGTGYRAVAKGKGIEFFLGYSHTITVNPPEGITLKVTDANHVVVEGTDKQVVGQVAANIRKLRAPEPYKGKGIKYADERILRKAGKAGK</sequence>
<gene>
    <name evidence="1" type="primary">rplF</name>
    <name type="ordered locus">Blon_2222</name>
    <name type="ordered locus">BLIJ_2295</name>
</gene>
<name>RL6_BIFLS</name>
<protein>
    <recommendedName>
        <fullName evidence="1">Large ribosomal subunit protein uL6</fullName>
    </recommendedName>
    <alternativeName>
        <fullName evidence="2">50S ribosomal protein L6</fullName>
    </alternativeName>
</protein>
<comment type="function">
    <text evidence="1">This protein binds to the 23S rRNA, and is important in its secondary structure. It is located near the subunit interface in the base of the L7/L12 stalk, and near the tRNA binding site of the peptidyltransferase center.</text>
</comment>
<comment type="subunit">
    <text evidence="1">Part of the 50S ribosomal subunit.</text>
</comment>
<comment type="similarity">
    <text evidence="1">Belongs to the universal ribosomal protein uL6 family.</text>
</comment>
<keyword id="KW-0687">Ribonucleoprotein</keyword>
<keyword id="KW-0689">Ribosomal protein</keyword>
<keyword id="KW-0694">RNA-binding</keyword>
<keyword id="KW-0699">rRNA-binding</keyword>
<evidence type="ECO:0000255" key="1">
    <source>
        <dbReference type="HAMAP-Rule" id="MF_01365"/>
    </source>
</evidence>
<evidence type="ECO:0000305" key="2"/>
<organism>
    <name type="scientific">Bifidobacterium longum subsp. infantis (strain ATCC 15697 / DSM 20088 / JCM 1222 / NCTC 11817 / S12)</name>
    <dbReference type="NCBI Taxonomy" id="391904"/>
    <lineage>
        <taxon>Bacteria</taxon>
        <taxon>Bacillati</taxon>
        <taxon>Actinomycetota</taxon>
        <taxon>Actinomycetes</taxon>
        <taxon>Bifidobacteriales</taxon>
        <taxon>Bifidobacteriaceae</taxon>
        <taxon>Bifidobacterium</taxon>
    </lineage>
</organism>
<dbReference type="EMBL" id="CP001095">
    <property type="protein sequence ID" value="ACJ53281.1"/>
    <property type="molecule type" value="Genomic_DNA"/>
</dbReference>
<dbReference type="EMBL" id="AP010889">
    <property type="protein sequence ID" value="BAJ69872.1"/>
    <property type="molecule type" value="Genomic_DNA"/>
</dbReference>
<dbReference type="RefSeq" id="WP_012578469.1">
    <property type="nucleotide sequence ID" value="NZ_JDTT01000039.1"/>
</dbReference>
<dbReference type="SMR" id="B7GNC5"/>
<dbReference type="KEGG" id="bln:Blon_2222"/>
<dbReference type="KEGG" id="blon:BLIJ_2295"/>
<dbReference type="PATRIC" id="fig|391904.8.peg.2297"/>
<dbReference type="HOGENOM" id="CLU_065464_1_2_11"/>
<dbReference type="Proteomes" id="UP000001360">
    <property type="component" value="Chromosome"/>
</dbReference>
<dbReference type="GO" id="GO:0022625">
    <property type="term" value="C:cytosolic large ribosomal subunit"/>
    <property type="evidence" value="ECO:0007669"/>
    <property type="project" value="TreeGrafter"/>
</dbReference>
<dbReference type="GO" id="GO:0019843">
    <property type="term" value="F:rRNA binding"/>
    <property type="evidence" value="ECO:0007669"/>
    <property type="project" value="UniProtKB-UniRule"/>
</dbReference>
<dbReference type="GO" id="GO:0003735">
    <property type="term" value="F:structural constituent of ribosome"/>
    <property type="evidence" value="ECO:0007669"/>
    <property type="project" value="InterPro"/>
</dbReference>
<dbReference type="GO" id="GO:0002181">
    <property type="term" value="P:cytoplasmic translation"/>
    <property type="evidence" value="ECO:0007669"/>
    <property type="project" value="TreeGrafter"/>
</dbReference>
<dbReference type="FunFam" id="3.90.930.12:FF:000001">
    <property type="entry name" value="50S ribosomal protein L6"/>
    <property type="match status" value="1"/>
</dbReference>
<dbReference type="Gene3D" id="3.90.930.12">
    <property type="entry name" value="Ribosomal protein L6, alpha-beta domain"/>
    <property type="match status" value="2"/>
</dbReference>
<dbReference type="HAMAP" id="MF_01365_B">
    <property type="entry name" value="Ribosomal_uL6_B"/>
    <property type="match status" value="1"/>
</dbReference>
<dbReference type="InterPro" id="IPR000702">
    <property type="entry name" value="Ribosomal_uL6-like"/>
</dbReference>
<dbReference type="InterPro" id="IPR036789">
    <property type="entry name" value="Ribosomal_uL6-like_a/b-dom_sf"/>
</dbReference>
<dbReference type="InterPro" id="IPR020040">
    <property type="entry name" value="Ribosomal_uL6_a/b-dom"/>
</dbReference>
<dbReference type="InterPro" id="IPR019906">
    <property type="entry name" value="Ribosomal_uL6_bac-type"/>
</dbReference>
<dbReference type="InterPro" id="IPR002358">
    <property type="entry name" value="Ribosomal_uL6_CS"/>
</dbReference>
<dbReference type="NCBIfam" id="TIGR03654">
    <property type="entry name" value="L6_bact"/>
    <property type="match status" value="1"/>
</dbReference>
<dbReference type="PANTHER" id="PTHR11655">
    <property type="entry name" value="60S/50S RIBOSOMAL PROTEIN L6/L9"/>
    <property type="match status" value="1"/>
</dbReference>
<dbReference type="PANTHER" id="PTHR11655:SF14">
    <property type="entry name" value="LARGE RIBOSOMAL SUBUNIT PROTEIN UL6M"/>
    <property type="match status" value="1"/>
</dbReference>
<dbReference type="Pfam" id="PF00347">
    <property type="entry name" value="Ribosomal_L6"/>
    <property type="match status" value="2"/>
</dbReference>
<dbReference type="PIRSF" id="PIRSF002162">
    <property type="entry name" value="Ribosomal_L6"/>
    <property type="match status" value="1"/>
</dbReference>
<dbReference type="PRINTS" id="PR00059">
    <property type="entry name" value="RIBOSOMALL6"/>
</dbReference>
<dbReference type="SUPFAM" id="SSF56053">
    <property type="entry name" value="Ribosomal protein L6"/>
    <property type="match status" value="2"/>
</dbReference>
<dbReference type="PROSITE" id="PS00525">
    <property type="entry name" value="RIBOSOMAL_L6_1"/>
    <property type="match status" value="1"/>
</dbReference>